<feature type="chain" id="PRO_0000061077" description="Cytochrome b">
    <location>
        <begin position="1"/>
        <end position="379"/>
    </location>
</feature>
<feature type="transmembrane region" description="Helical" evidence="2">
    <location>
        <begin position="33"/>
        <end position="53"/>
    </location>
</feature>
<feature type="transmembrane region" description="Helical" evidence="2">
    <location>
        <begin position="77"/>
        <end position="98"/>
    </location>
</feature>
<feature type="transmembrane region" description="Helical" evidence="2">
    <location>
        <begin position="113"/>
        <end position="133"/>
    </location>
</feature>
<feature type="transmembrane region" description="Helical" evidence="2">
    <location>
        <begin position="178"/>
        <end position="198"/>
    </location>
</feature>
<feature type="transmembrane region" description="Helical" evidence="2">
    <location>
        <begin position="226"/>
        <end position="246"/>
    </location>
</feature>
<feature type="transmembrane region" description="Helical" evidence="2">
    <location>
        <begin position="288"/>
        <end position="308"/>
    </location>
</feature>
<feature type="transmembrane region" description="Helical" evidence="2">
    <location>
        <begin position="320"/>
        <end position="340"/>
    </location>
</feature>
<feature type="transmembrane region" description="Helical" evidence="2">
    <location>
        <begin position="347"/>
        <end position="367"/>
    </location>
</feature>
<feature type="binding site" description="axial binding residue" evidence="2">
    <location>
        <position position="83"/>
    </location>
    <ligand>
        <name>heme b</name>
        <dbReference type="ChEBI" id="CHEBI:60344"/>
        <label>b562</label>
    </ligand>
    <ligandPart>
        <name>Fe</name>
        <dbReference type="ChEBI" id="CHEBI:18248"/>
    </ligandPart>
</feature>
<feature type="binding site" description="axial binding residue" evidence="2">
    <location>
        <position position="97"/>
    </location>
    <ligand>
        <name>heme b</name>
        <dbReference type="ChEBI" id="CHEBI:60344"/>
        <label>b566</label>
    </ligand>
    <ligandPart>
        <name>Fe</name>
        <dbReference type="ChEBI" id="CHEBI:18248"/>
    </ligandPart>
</feature>
<feature type="binding site" description="axial binding residue" evidence="2">
    <location>
        <position position="182"/>
    </location>
    <ligand>
        <name>heme b</name>
        <dbReference type="ChEBI" id="CHEBI:60344"/>
        <label>b562</label>
    </ligand>
    <ligandPart>
        <name>Fe</name>
        <dbReference type="ChEBI" id="CHEBI:18248"/>
    </ligandPart>
</feature>
<feature type="binding site" description="axial binding residue" evidence="2">
    <location>
        <position position="196"/>
    </location>
    <ligand>
        <name>heme b</name>
        <dbReference type="ChEBI" id="CHEBI:60344"/>
        <label>b566</label>
    </ligand>
    <ligandPart>
        <name>Fe</name>
        <dbReference type="ChEBI" id="CHEBI:18248"/>
    </ligandPart>
</feature>
<feature type="binding site" evidence="2">
    <location>
        <position position="201"/>
    </location>
    <ligand>
        <name>a ubiquinone</name>
        <dbReference type="ChEBI" id="CHEBI:16389"/>
    </ligand>
</feature>
<evidence type="ECO:0000250" key="1"/>
<evidence type="ECO:0000250" key="2">
    <source>
        <dbReference type="UniProtKB" id="P00157"/>
    </source>
</evidence>
<evidence type="ECO:0000255" key="3">
    <source>
        <dbReference type="PROSITE-ProRule" id="PRU00967"/>
    </source>
</evidence>
<evidence type="ECO:0000255" key="4">
    <source>
        <dbReference type="PROSITE-ProRule" id="PRU00968"/>
    </source>
</evidence>
<sequence length="379" mass="42760">MTNIRKTHPLMKIINDAFIDLPSPSNISSWWNFGSLLGLCLIMQILTGLFLAMHYTPDTSTAFSSVAHICRDVNYGWFIRYLHANGASMFFICLYAHIGRGLYYGSYMFQETWNIGVLLLLTVMATAFVGYVLPWGQMSFWGATVITNLLSAIPYIGTTLVEWIWGGFSVDKATLTRFFAFHFILPFMITALAAVHLLFLHETGSNNPTGIPSNMDMIPFHPYYTIKDILGALLLILTLLALTLFTPDLLGDPDNYTPANPLSTPAHIKPEWYFLFAYAILRSIPNKLGGVLALLLSILILIFIPMLQTSKQRSMMFRPFSQLLFWTLVADLLTLTWIGGQPVEHPYIIVGQLASILYFLLILVLMPTVSLIENKLLKW</sequence>
<keyword id="KW-0249">Electron transport</keyword>
<keyword id="KW-0349">Heme</keyword>
<keyword id="KW-0408">Iron</keyword>
<keyword id="KW-0472">Membrane</keyword>
<keyword id="KW-0479">Metal-binding</keyword>
<keyword id="KW-0496">Mitochondrion</keyword>
<keyword id="KW-0999">Mitochondrion inner membrane</keyword>
<keyword id="KW-0679">Respiratory chain</keyword>
<keyword id="KW-0812">Transmembrane</keyword>
<keyword id="KW-1133">Transmembrane helix</keyword>
<keyword id="KW-0813">Transport</keyword>
<keyword id="KW-0830">Ubiquinone</keyword>
<organism>
    <name type="scientific">Leucopleurus acutus</name>
    <name type="common">Atlantic white-sided dolphin</name>
    <name type="synonym">Lagenorhynchus acutus</name>
    <dbReference type="NCBI Taxonomy" id="3371109"/>
    <lineage>
        <taxon>Eukaryota</taxon>
        <taxon>Metazoa</taxon>
        <taxon>Chordata</taxon>
        <taxon>Craniata</taxon>
        <taxon>Vertebrata</taxon>
        <taxon>Euteleostomi</taxon>
        <taxon>Mammalia</taxon>
        <taxon>Eutheria</taxon>
        <taxon>Laurasiatheria</taxon>
        <taxon>Artiodactyla</taxon>
        <taxon>Whippomorpha</taxon>
        <taxon>Cetacea</taxon>
        <taxon>Odontoceti</taxon>
        <taxon>Delphinidae</taxon>
        <taxon>Leucopleurus</taxon>
    </lineage>
</organism>
<accession>Q9TDL0</accession>
<reference key="1">
    <citation type="journal article" date="1999" name="Mar. Mamm. Sci.">
        <title>Phylogenetic relationships among the delphinid cetaceans based on full cytochrome b sequences.</title>
        <authorList>
            <person name="LeDuc R.G."/>
            <person name="Perrin W.F."/>
            <person name="Dizon A.E."/>
        </authorList>
    </citation>
    <scope>NUCLEOTIDE SEQUENCE [GENOMIC DNA]</scope>
</reference>
<dbReference type="EMBL" id="AF084075">
    <property type="protein sequence ID" value="AAD54452.1"/>
    <property type="molecule type" value="Genomic_DNA"/>
</dbReference>
<dbReference type="SMR" id="Q9TDL0"/>
<dbReference type="GO" id="GO:0005743">
    <property type="term" value="C:mitochondrial inner membrane"/>
    <property type="evidence" value="ECO:0007669"/>
    <property type="project" value="UniProtKB-SubCell"/>
</dbReference>
<dbReference type="GO" id="GO:0045275">
    <property type="term" value="C:respiratory chain complex III"/>
    <property type="evidence" value="ECO:0007669"/>
    <property type="project" value="InterPro"/>
</dbReference>
<dbReference type="GO" id="GO:0046872">
    <property type="term" value="F:metal ion binding"/>
    <property type="evidence" value="ECO:0007669"/>
    <property type="project" value="UniProtKB-KW"/>
</dbReference>
<dbReference type="GO" id="GO:0008121">
    <property type="term" value="F:ubiquinol-cytochrome-c reductase activity"/>
    <property type="evidence" value="ECO:0007669"/>
    <property type="project" value="InterPro"/>
</dbReference>
<dbReference type="GO" id="GO:0006122">
    <property type="term" value="P:mitochondrial electron transport, ubiquinol to cytochrome c"/>
    <property type="evidence" value="ECO:0007669"/>
    <property type="project" value="TreeGrafter"/>
</dbReference>
<dbReference type="CDD" id="cd00290">
    <property type="entry name" value="cytochrome_b_C"/>
    <property type="match status" value="1"/>
</dbReference>
<dbReference type="CDD" id="cd00284">
    <property type="entry name" value="Cytochrome_b_N"/>
    <property type="match status" value="1"/>
</dbReference>
<dbReference type="FunFam" id="1.20.810.10:FF:000002">
    <property type="entry name" value="Cytochrome b"/>
    <property type="match status" value="1"/>
</dbReference>
<dbReference type="Gene3D" id="1.20.810.10">
    <property type="entry name" value="Cytochrome Bc1 Complex, Chain C"/>
    <property type="match status" value="1"/>
</dbReference>
<dbReference type="InterPro" id="IPR005798">
    <property type="entry name" value="Cyt_b/b6_C"/>
</dbReference>
<dbReference type="InterPro" id="IPR036150">
    <property type="entry name" value="Cyt_b/b6_C_sf"/>
</dbReference>
<dbReference type="InterPro" id="IPR005797">
    <property type="entry name" value="Cyt_b/b6_N"/>
</dbReference>
<dbReference type="InterPro" id="IPR027387">
    <property type="entry name" value="Cytb/b6-like_sf"/>
</dbReference>
<dbReference type="InterPro" id="IPR030689">
    <property type="entry name" value="Cytochrome_b"/>
</dbReference>
<dbReference type="InterPro" id="IPR048260">
    <property type="entry name" value="Cytochrome_b_C_euk/bac"/>
</dbReference>
<dbReference type="InterPro" id="IPR048259">
    <property type="entry name" value="Cytochrome_b_N_euk/bac"/>
</dbReference>
<dbReference type="InterPro" id="IPR016174">
    <property type="entry name" value="Di-haem_cyt_TM"/>
</dbReference>
<dbReference type="PANTHER" id="PTHR19271">
    <property type="entry name" value="CYTOCHROME B"/>
    <property type="match status" value="1"/>
</dbReference>
<dbReference type="PANTHER" id="PTHR19271:SF16">
    <property type="entry name" value="CYTOCHROME B"/>
    <property type="match status" value="1"/>
</dbReference>
<dbReference type="Pfam" id="PF00032">
    <property type="entry name" value="Cytochrom_B_C"/>
    <property type="match status" value="1"/>
</dbReference>
<dbReference type="Pfam" id="PF00033">
    <property type="entry name" value="Cytochrome_B"/>
    <property type="match status" value="1"/>
</dbReference>
<dbReference type="PIRSF" id="PIRSF038885">
    <property type="entry name" value="COB"/>
    <property type="match status" value="1"/>
</dbReference>
<dbReference type="SUPFAM" id="SSF81648">
    <property type="entry name" value="a domain/subunit of cytochrome bc1 complex (Ubiquinol-cytochrome c reductase)"/>
    <property type="match status" value="1"/>
</dbReference>
<dbReference type="SUPFAM" id="SSF81342">
    <property type="entry name" value="Transmembrane di-heme cytochromes"/>
    <property type="match status" value="1"/>
</dbReference>
<dbReference type="PROSITE" id="PS51003">
    <property type="entry name" value="CYTB_CTER"/>
    <property type="match status" value="1"/>
</dbReference>
<dbReference type="PROSITE" id="PS51002">
    <property type="entry name" value="CYTB_NTER"/>
    <property type="match status" value="1"/>
</dbReference>
<proteinExistence type="inferred from homology"/>
<name>CYB_LEUAC</name>
<geneLocation type="mitochondrion"/>
<comment type="function">
    <text evidence="2">Component of the ubiquinol-cytochrome c reductase complex (complex III or cytochrome b-c1 complex) that is part of the mitochondrial respiratory chain. The b-c1 complex mediates electron transfer from ubiquinol to cytochrome c. Contributes to the generation of a proton gradient across the mitochondrial membrane that is then used for ATP synthesis.</text>
</comment>
<comment type="cofactor">
    <cofactor evidence="2">
        <name>heme b</name>
        <dbReference type="ChEBI" id="CHEBI:60344"/>
    </cofactor>
    <text evidence="2">Binds 2 heme b groups non-covalently.</text>
</comment>
<comment type="subunit">
    <text evidence="2">The cytochrome bc1 complex contains 11 subunits: 3 respiratory subunits (MT-CYB, CYC1 and UQCRFS1), 2 core proteins (UQCRC1 and UQCRC2) and 6 low-molecular weight proteins (UQCRH/QCR6, UQCRB/QCR7, UQCRQ/QCR8, UQCR10/QCR9, UQCR11/QCR10 and a cleavage product of UQCRFS1). This cytochrome bc1 complex then forms a dimer.</text>
</comment>
<comment type="subcellular location">
    <subcellularLocation>
        <location evidence="2">Mitochondrion inner membrane</location>
        <topology evidence="2">Multi-pass membrane protein</topology>
    </subcellularLocation>
</comment>
<comment type="miscellaneous">
    <text evidence="1">Heme 1 (or BL or b562) is low-potential and absorbs at about 562 nm, and heme 2 (or BH or b566) is high-potential and absorbs at about 566 nm.</text>
</comment>
<comment type="similarity">
    <text evidence="3 4">Belongs to the cytochrome b family.</text>
</comment>
<comment type="caution">
    <text evidence="2">The full-length protein contains only eight transmembrane helices, not nine as predicted by bioinformatics tools.</text>
</comment>
<protein>
    <recommendedName>
        <fullName>Cytochrome b</fullName>
    </recommendedName>
    <alternativeName>
        <fullName>Complex III subunit 3</fullName>
    </alternativeName>
    <alternativeName>
        <fullName>Complex III subunit III</fullName>
    </alternativeName>
    <alternativeName>
        <fullName>Cytochrome b-c1 complex subunit 3</fullName>
    </alternativeName>
    <alternativeName>
        <fullName>Ubiquinol-cytochrome-c reductase complex cytochrome b subunit</fullName>
    </alternativeName>
</protein>
<gene>
    <name type="primary">MT-CYB</name>
    <name type="synonym">COB</name>
    <name type="synonym">CYTB</name>
    <name type="synonym">MTCYB</name>
</gene>